<keyword id="KW-0648">Protein biosynthesis</keyword>
<keyword id="KW-0808">Transferase</keyword>
<protein>
    <recommendedName>
        <fullName evidence="1">Methionyl-tRNA formyltransferase</fullName>
        <ecNumber evidence="1">2.1.2.9</ecNumber>
    </recommendedName>
</protein>
<evidence type="ECO:0000255" key="1">
    <source>
        <dbReference type="HAMAP-Rule" id="MF_00182"/>
    </source>
</evidence>
<dbReference type="EC" id="2.1.2.9" evidence="1"/>
<dbReference type="EMBL" id="CP001175">
    <property type="protein sequence ID" value="ACK39088.1"/>
    <property type="molecule type" value="Genomic_DNA"/>
</dbReference>
<dbReference type="RefSeq" id="WP_012581119.1">
    <property type="nucleotide sequence ID" value="NC_011660.1"/>
</dbReference>
<dbReference type="SMR" id="B8DDS9"/>
<dbReference type="KEGG" id="lmh:LMHCC_0734"/>
<dbReference type="HOGENOM" id="CLU_033347_1_1_9"/>
<dbReference type="GO" id="GO:0005829">
    <property type="term" value="C:cytosol"/>
    <property type="evidence" value="ECO:0007669"/>
    <property type="project" value="TreeGrafter"/>
</dbReference>
<dbReference type="GO" id="GO:0004479">
    <property type="term" value="F:methionyl-tRNA formyltransferase activity"/>
    <property type="evidence" value="ECO:0007669"/>
    <property type="project" value="UniProtKB-UniRule"/>
</dbReference>
<dbReference type="CDD" id="cd08646">
    <property type="entry name" value="FMT_core_Met-tRNA-FMT_N"/>
    <property type="match status" value="1"/>
</dbReference>
<dbReference type="CDD" id="cd08704">
    <property type="entry name" value="Met_tRNA_FMT_C"/>
    <property type="match status" value="1"/>
</dbReference>
<dbReference type="FunFam" id="3.40.50.12230:FF:000001">
    <property type="entry name" value="Methionyl-tRNA formyltransferase"/>
    <property type="match status" value="1"/>
</dbReference>
<dbReference type="Gene3D" id="3.40.50.12230">
    <property type="match status" value="1"/>
</dbReference>
<dbReference type="HAMAP" id="MF_00182">
    <property type="entry name" value="Formyl_trans"/>
    <property type="match status" value="1"/>
</dbReference>
<dbReference type="InterPro" id="IPR005794">
    <property type="entry name" value="Fmt"/>
</dbReference>
<dbReference type="InterPro" id="IPR005793">
    <property type="entry name" value="Formyl_trans_C"/>
</dbReference>
<dbReference type="InterPro" id="IPR002376">
    <property type="entry name" value="Formyl_transf_N"/>
</dbReference>
<dbReference type="InterPro" id="IPR036477">
    <property type="entry name" value="Formyl_transf_N_sf"/>
</dbReference>
<dbReference type="InterPro" id="IPR011034">
    <property type="entry name" value="Formyl_transferase-like_C_sf"/>
</dbReference>
<dbReference type="InterPro" id="IPR001555">
    <property type="entry name" value="GART_AS"/>
</dbReference>
<dbReference type="InterPro" id="IPR044135">
    <property type="entry name" value="Met-tRNA-FMT_C"/>
</dbReference>
<dbReference type="InterPro" id="IPR041711">
    <property type="entry name" value="Met-tRNA-FMT_N"/>
</dbReference>
<dbReference type="NCBIfam" id="TIGR00460">
    <property type="entry name" value="fmt"/>
    <property type="match status" value="1"/>
</dbReference>
<dbReference type="PANTHER" id="PTHR11138">
    <property type="entry name" value="METHIONYL-TRNA FORMYLTRANSFERASE"/>
    <property type="match status" value="1"/>
</dbReference>
<dbReference type="PANTHER" id="PTHR11138:SF5">
    <property type="entry name" value="METHIONYL-TRNA FORMYLTRANSFERASE, MITOCHONDRIAL"/>
    <property type="match status" value="1"/>
</dbReference>
<dbReference type="Pfam" id="PF02911">
    <property type="entry name" value="Formyl_trans_C"/>
    <property type="match status" value="1"/>
</dbReference>
<dbReference type="Pfam" id="PF00551">
    <property type="entry name" value="Formyl_trans_N"/>
    <property type="match status" value="1"/>
</dbReference>
<dbReference type="SUPFAM" id="SSF50486">
    <property type="entry name" value="FMT C-terminal domain-like"/>
    <property type="match status" value="1"/>
</dbReference>
<dbReference type="SUPFAM" id="SSF53328">
    <property type="entry name" value="Formyltransferase"/>
    <property type="match status" value="1"/>
</dbReference>
<dbReference type="PROSITE" id="PS00373">
    <property type="entry name" value="GART"/>
    <property type="match status" value="1"/>
</dbReference>
<organism>
    <name type="scientific">Listeria monocytogenes serotype 4a (strain HCC23)</name>
    <dbReference type="NCBI Taxonomy" id="552536"/>
    <lineage>
        <taxon>Bacteria</taxon>
        <taxon>Bacillati</taxon>
        <taxon>Bacillota</taxon>
        <taxon>Bacilli</taxon>
        <taxon>Bacillales</taxon>
        <taxon>Listeriaceae</taxon>
        <taxon>Listeria</taxon>
    </lineage>
</organism>
<accession>B8DDS9</accession>
<reference key="1">
    <citation type="journal article" date="2011" name="J. Bacteriol.">
        <title>Genome sequence of lineage III Listeria monocytogenes strain HCC23.</title>
        <authorList>
            <person name="Steele C.L."/>
            <person name="Donaldson J.R."/>
            <person name="Paul D."/>
            <person name="Banes M.M."/>
            <person name="Arick T."/>
            <person name="Bridges S.M."/>
            <person name="Lawrence M.L."/>
        </authorList>
    </citation>
    <scope>NUCLEOTIDE SEQUENCE [LARGE SCALE GENOMIC DNA]</scope>
    <source>
        <strain>HCC23</strain>
    </source>
</reference>
<comment type="function">
    <text evidence="1">Attaches a formyl group to the free amino group of methionyl-tRNA(fMet). The formyl group appears to play a dual role in the initiator identity of N-formylmethionyl-tRNA by promoting its recognition by IF2 and preventing the misappropriation of this tRNA by the elongation apparatus.</text>
</comment>
<comment type="catalytic activity">
    <reaction evidence="1">
        <text>L-methionyl-tRNA(fMet) + (6R)-10-formyltetrahydrofolate = N-formyl-L-methionyl-tRNA(fMet) + (6S)-5,6,7,8-tetrahydrofolate + H(+)</text>
        <dbReference type="Rhea" id="RHEA:24380"/>
        <dbReference type="Rhea" id="RHEA-COMP:9952"/>
        <dbReference type="Rhea" id="RHEA-COMP:9953"/>
        <dbReference type="ChEBI" id="CHEBI:15378"/>
        <dbReference type="ChEBI" id="CHEBI:57453"/>
        <dbReference type="ChEBI" id="CHEBI:78530"/>
        <dbReference type="ChEBI" id="CHEBI:78844"/>
        <dbReference type="ChEBI" id="CHEBI:195366"/>
        <dbReference type="EC" id="2.1.2.9"/>
    </reaction>
</comment>
<comment type="similarity">
    <text evidence="1">Belongs to the Fmt family.</text>
</comment>
<proteinExistence type="inferred from homology"/>
<gene>
    <name evidence="1" type="primary">fmt</name>
    <name type="ordered locus">LMHCC_0734</name>
</gene>
<feature type="chain" id="PRO_1000190029" description="Methionyl-tRNA formyltransferase">
    <location>
        <begin position="1"/>
        <end position="312"/>
    </location>
</feature>
<feature type="binding site" evidence="1">
    <location>
        <begin position="109"/>
        <end position="112"/>
    </location>
    <ligand>
        <name>(6S)-5,6,7,8-tetrahydrofolate</name>
        <dbReference type="ChEBI" id="CHEBI:57453"/>
    </ligand>
</feature>
<sequence length="312" mass="34245">MTKIIFMGTPEFSVPVLTQLASTYDVVAVVTQPDRPVGRKRVLTPPPVKKAALELAIPVYQPEKLRTSSELEELIALEADLLVTAAYGQILPNSLLESPKHGAINVHASLLPEYRGGAPVHYALLDGKTETGVTIMYMVEKLDAGDMISQRKIPITDEDNTGTMFDKLSKLGAELLMDTLPDFLAGKITAIPQDPEKVTFARNISREQEKIDWTKPGRTIFNQIRGLSPWPVAYTTLEEKPFKIWEATYEETKESGEPGAILADKTTLKIVTGDGTLIVPTVIQPAGKPKMDIHSFMSGAGRNLSKTTRFGE</sequence>
<name>FMT_LISMH</name>